<proteinExistence type="inferred from homology"/>
<keyword id="KW-0134">Cell wall</keyword>
<keyword id="KW-0217">Developmental protein</keyword>
<keyword id="KW-1185">Reference proteome</keyword>
<keyword id="KW-0677">Repeat</keyword>
<keyword id="KW-0964">Secreted</keyword>
<keyword id="KW-0732">Signal</keyword>
<accession>P15642</accession>
<name>PRP3_SOYBN</name>
<dbReference type="EMBL" id="J05209">
    <property type="protein sequence ID" value="AAA34012.1"/>
    <property type="molecule type" value="Genomic_DNA"/>
</dbReference>
<dbReference type="PIR" id="B35532">
    <property type="entry name" value="B35532"/>
</dbReference>
<dbReference type="RefSeq" id="NP_001237370.1">
    <property type="nucleotide sequence ID" value="NM_001250441.2"/>
</dbReference>
<dbReference type="SMR" id="P15642"/>
<dbReference type="STRING" id="3847.P15642"/>
<dbReference type="PaxDb" id="3847-GLYMA11G21616.1"/>
<dbReference type="EnsemblPlants" id="KRH30054">
    <property type="protein sequence ID" value="KRH30054"/>
    <property type="gene ID" value="GLYMA_11G154900"/>
</dbReference>
<dbReference type="GeneID" id="100306602"/>
<dbReference type="Gramene" id="KRH30054">
    <property type="protein sequence ID" value="KRH30054"/>
    <property type="gene ID" value="GLYMA_11G154900"/>
</dbReference>
<dbReference type="KEGG" id="gmx:100306602"/>
<dbReference type="HOGENOM" id="CLU_188701_0_0_1"/>
<dbReference type="InParanoid" id="P15642"/>
<dbReference type="OMA" id="PYKKPPY"/>
<dbReference type="Proteomes" id="UP000008827">
    <property type="component" value="Chromosome 11"/>
</dbReference>
<dbReference type="GO" id="GO:0005576">
    <property type="term" value="C:extracellular region"/>
    <property type="evidence" value="ECO:0007669"/>
    <property type="project" value="UniProtKB-KW"/>
</dbReference>
<dbReference type="InterPro" id="IPR003882">
    <property type="entry name" value="Pistil_extensin"/>
</dbReference>
<dbReference type="InterPro" id="IPR051308">
    <property type="entry name" value="Proline-rich_CW_protein"/>
</dbReference>
<dbReference type="PANTHER" id="PTHR34629">
    <property type="entry name" value="PROLINE-RICH EXTENSIN-LIKE PROTEIN EPR1"/>
    <property type="match status" value="1"/>
</dbReference>
<dbReference type="PANTHER" id="PTHR34629:SF4">
    <property type="entry name" value="REPETITIVE PROLINE-RICH CELL WALL PROTEIN 3"/>
    <property type="match status" value="1"/>
</dbReference>
<dbReference type="PRINTS" id="PR01218">
    <property type="entry name" value="PSTLEXTENSIN"/>
</dbReference>
<reference key="1">
    <citation type="journal article" date="1990" name="J. Biol. Chem.">
        <title>Characterization of a proline-rich cell wall protein gene family of soybean. A comparative analysis.</title>
        <authorList>
            <person name="Hong J.C."/>
            <person name="Nagao R.T."/>
            <person name="Key J.L."/>
        </authorList>
    </citation>
    <scope>NUCLEOTIDE SEQUENCE [GENOMIC DNA]</scope>
</reference>
<sequence>MASFVSFLVLLLAALILMPQGLATYYKPIKKPPVYKPPVYKPPVYKPPVYKPKPPVYKPKPPVYKPPYKKPPYKKPPYGKYPPVEDNTHA</sequence>
<protein>
    <recommendedName>
        <fullName>Repetitive proline-rich cell wall protein 3</fullName>
    </recommendedName>
</protein>
<comment type="subcellular location">
    <subcellularLocation>
        <location evidence="2">Secreted</location>
        <location evidence="2">Cell wall</location>
    </subcellularLocation>
</comment>
<comment type="similarity">
    <text evidence="2">Belongs to the plant proline-rich protein superfamily. ENOD12 family.</text>
</comment>
<gene>
    <name type="primary">PRP3</name>
</gene>
<organism>
    <name type="scientific">Glycine max</name>
    <name type="common">Soybean</name>
    <name type="synonym">Glycine hispida</name>
    <dbReference type="NCBI Taxonomy" id="3847"/>
    <lineage>
        <taxon>Eukaryota</taxon>
        <taxon>Viridiplantae</taxon>
        <taxon>Streptophyta</taxon>
        <taxon>Embryophyta</taxon>
        <taxon>Tracheophyta</taxon>
        <taxon>Spermatophyta</taxon>
        <taxon>Magnoliopsida</taxon>
        <taxon>eudicotyledons</taxon>
        <taxon>Gunneridae</taxon>
        <taxon>Pentapetalae</taxon>
        <taxon>rosids</taxon>
        <taxon>fabids</taxon>
        <taxon>Fabales</taxon>
        <taxon>Fabaceae</taxon>
        <taxon>Papilionoideae</taxon>
        <taxon>50 kb inversion clade</taxon>
        <taxon>NPAAA clade</taxon>
        <taxon>indigoferoid/millettioid clade</taxon>
        <taxon>Phaseoleae</taxon>
        <taxon>Glycine</taxon>
        <taxon>Glycine subgen. Soja</taxon>
    </lineage>
</organism>
<feature type="signal peptide">
    <location>
        <begin position="1"/>
        <end position="24"/>
    </location>
</feature>
<feature type="chain" id="PRO_0000022136" description="Repetitive proline-rich cell wall protein 3">
    <location>
        <begin position="25"/>
        <end position="90"/>
    </location>
</feature>
<feature type="region of interest" description="Disordered" evidence="1">
    <location>
        <begin position="46"/>
        <end position="90"/>
    </location>
</feature>
<feature type="compositionally biased region" description="Pro residues" evidence="1">
    <location>
        <begin position="46"/>
        <end position="65"/>
    </location>
</feature>
<evidence type="ECO:0000256" key="1">
    <source>
        <dbReference type="SAM" id="MobiDB-lite"/>
    </source>
</evidence>
<evidence type="ECO:0000305" key="2"/>